<proteinExistence type="inferred from homology"/>
<dbReference type="EMBL" id="X59720">
    <property type="protein sequence ID" value="CAA42246.1"/>
    <property type="molecule type" value="Genomic_DNA"/>
</dbReference>
<dbReference type="EMBL" id="AY693140">
    <property type="protein sequence ID" value="AAT93159.1"/>
    <property type="molecule type" value="Genomic_DNA"/>
</dbReference>
<dbReference type="EMBL" id="BK006937">
    <property type="protein sequence ID" value="DAA07573.1"/>
    <property type="molecule type" value="Genomic_DNA"/>
</dbReference>
<dbReference type="PIR" id="S19416">
    <property type="entry name" value="S19416"/>
</dbReference>
<dbReference type="RefSeq" id="NP_010029.1">
    <property type="nucleotide sequence ID" value="NM_001178811.1"/>
</dbReference>
<dbReference type="SMR" id="P25610"/>
<dbReference type="BioGRID" id="31076">
    <property type="interactions" value="34"/>
</dbReference>
<dbReference type="FunCoup" id="P25610">
    <property type="interactions" value="55"/>
</dbReference>
<dbReference type="STRING" id="4932.YCR104W"/>
<dbReference type="PaxDb" id="4932-YCR104W"/>
<dbReference type="EnsemblFungi" id="YCR104W_mRNA">
    <property type="protein sequence ID" value="YCR104W"/>
    <property type="gene ID" value="YCR104W"/>
</dbReference>
<dbReference type="GeneID" id="850468"/>
<dbReference type="KEGG" id="sce:YCR104W"/>
<dbReference type="AGR" id="SGD:S000000701"/>
<dbReference type="SGD" id="S000000701">
    <property type="gene designation" value="PAU3"/>
</dbReference>
<dbReference type="VEuPathDB" id="FungiDB:YCR104W"/>
<dbReference type="eggNOG" id="ENOG502SR1B">
    <property type="taxonomic scope" value="Eukaryota"/>
</dbReference>
<dbReference type="GeneTree" id="ENSGT00940000176276"/>
<dbReference type="HOGENOM" id="CLU_136376_0_0_1"/>
<dbReference type="InParanoid" id="P25610"/>
<dbReference type="OMA" id="XIIRVIR"/>
<dbReference type="OrthoDB" id="4053771at2759"/>
<dbReference type="BioCyc" id="YEAST:G3O-29397-MONOMER"/>
<dbReference type="BioGRID-ORCS" id="850468">
    <property type="hits" value="0 hits in 10 CRISPR screens"/>
</dbReference>
<dbReference type="PRO" id="PR:P25610"/>
<dbReference type="Proteomes" id="UP000002311">
    <property type="component" value="Chromosome III"/>
</dbReference>
<dbReference type="RNAct" id="P25610">
    <property type="molecule type" value="protein"/>
</dbReference>
<dbReference type="GO" id="GO:0009277">
    <property type="term" value="C:fungal-type cell wall"/>
    <property type="evidence" value="ECO:0000318"/>
    <property type="project" value="GO_Central"/>
</dbReference>
<dbReference type="GO" id="GO:0016020">
    <property type="term" value="C:membrane"/>
    <property type="evidence" value="ECO:0007669"/>
    <property type="project" value="UniProtKB-SubCell"/>
</dbReference>
<dbReference type="GO" id="GO:0005199">
    <property type="term" value="F:structural constituent of cell wall"/>
    <property type="evidence" value="ECO:0000318"/>
    <property type="project" value="GO_Central"/>
</dbReference>
<dbReference type="GO" id="GO:0031505">
    <property type="term" value="P:fungal-type cell wall organization"/>
    <property type="evidence" value="ECO:0000318"/>
    <property type="project" value="GO_Central"/>
</dbReference>
<dbReference type="InterPro" id="IPR000992">
    <property type="entry name" value="SRP1_TIP1"/>
</dbReference>
<dbReference type="InterPro" id="IPR050788">
    <property type="entry name" value="Yeast_SRP1/TIP1_CWP"/>
</dbReference>
<dbReference type="PANTHER" id="PTHR31002:SF34">
    <property type="entry name" value="CELL WALL PROTEIN CWP1-RELATED"/>
    <property type="match status" value="1"/>
</dbReference>
<dbReference type="PANTHER" id="PTHR31002">
    <property type="entry name" value="SERIPAUPERIN"/>
    <property type="match status" value="1"/>
</dbReference>
<dbReference type="Pfam" id="PF00660">
    <property type="entry name" value="SRP1_TIP1"/>
    <property type="match status" value="1"/>
</dbReference>
<dbReference type="PROSITE" id="PS00724">
    <property type="entry name" value="SRP1_TIP1"/>
    <property type="match status" value="1"/>
</dbReference>
<name>PAU3_YEAST</name>
<evidence type="ECO:0000255" key="1"/>
<evidence type="ECO:0000305" key="2"/>
<organism>
    <name type="scientific">Saccharomyces cerevisiae (strain ATCC 204508 / S288c)</name>
    <name type="common">Baker's yeast</name>
    <dbReference type="NCBI Taxonomy" id="559292"/>
    <lineage>
        <taxon>Eukaryota</taxon>
        <taxon>Fungi</taxon>
        <taxon>Dikarya</taxon>
        <taxon>Ascomycota</taxon>
        <taxon>Saccharomycotina</taxon>
        <taxon>Saccharomycetes</taxon>
        <taxon>Saccharomycetales</taxon>
        <taxon>Saccharomycetaceae</taxon>
        <taxon>Saccharomyces</taxon>
    </lineage>
</organism>
<gene>
    <name type="primary">PAU3</name>
    <name type="ordered locus">YCR104W</name>
</gene>
<keyword id="KW-0472">Membrane</keyword>
<keyword id="KW-1185">Reference proteome</keyword>
<keyword id="KW-0812">Transmembrane</keyword>
<keyword id="KW-1133">Transmembrane helix</keyword>
<sequence>MVKLTSIAAGVAAIAAGIAAAPATTTLSPSDERVNLVELGVYVSDIRAHLAQYYLFQAAHPTETYPVEIAEAVFNYGDFTTMLTGIPAEQVTRVITGVPWYSTRLRPAISSALSKDGIYTAIPK</sequence>
<comment type="subcellular location">
    <subcellularLocation>
        <location evidence="2">Membrane</location>
        <topology evidence="2">Single-pass membrane protein</topology>
    </subcellularLocation>
</comment>
<comment type="similarity">
    <text evidence="2">Belongs to the SRP1/TIP1 family. Seripauperin subfamily.</text>
</comment>
<feature type="chain" id="PRO_0000203780" description="Seripauperin-3">
    <location>
        <begin position="1"/>
        <end position="124"/>
    </location>
</feature>
<feature type="transmembrane region" description="Helical" evidence="1">
    <location>
        <begin position="7"/>
        <end position="24"/>
    </location>
</feature>
<feature type="sequence conflict" description="In Ref. 3; AAT93159." evidence="2" ref="3">
    <original>T</original>
    <variation>S</variation>
    <location>
        <position position="64"/>
    </location>
</feature>
<protein>
    <recommendedName>
        <fullName>Seripauperin-3</fullName>
    </recommendedName>
</protein>
<accession>P25610</accession>
<accession>D6VRA4</accession>
<accession>Q6B1E0</accession>
<reference key="1">
    <citation type="journal article" date="1992" name="Nature">
        <title>The complete DNA sequence of yeast chromosome III.</title>
        <authorList>
            <person name="Oliver S.G."/>
            <person name="van der Aart Q.J.M."/>
            <person name="Agostoni-Carbone M.L."/>
            <person name="Aigle M."/>
            <person name="Alberghina L."/>
            <person name="Alexandraki D."/>
            <person name="Antoine G."/>
            <person name="Anwar R."/>
            <person name="Ballesta J.P.G."/>
            <person name="Benit P."/>
            <person name="Berben G."/>
            <person name="Bergantino E."/>
            <person name="Biteau N."/>
            <person name="Bolle P.-A."/>
            <person name="Bolotin-Fukuhara M."/>
            <person name="Brown A."/>
            <person name="Brown A.J.P."/>
            <person name="Buhler J.-M."/>
            <person name="Carcano C."/>
            <person name="Carignani G."/>
            <person name="Cederberg H."/>
            <person name="Chanet R."/>
            <person name="Contreras R."/>
            <person name="Crouzet M."/>
            <person name="Daignan-Fornier B."/>
            <person name="Defoor E."/>
            <person name="Delgado M.D."/>
            <person name="Demolder J."/>
            <person name="Doira C."/>
            <person name="Dubois E."/>
            <person name="Dujon B."/>
            <person name="Duesterhoeft A."/>
            <person name="Erdmann D."/>
            <person name="Esteban M."/>
            <person name="Fabre F."/>
            <person name="Fairhead C."/>
            <person name="Faye G."/>
            <person name="Feldmann H."/>
            <person name="Fiers W."/>
            <person name="Francingues-Gaillard M.-C."/>
            <person name="Franco L."/>
            <person name="Frontali L."/>
            <person name="Fukuhara H."/>
            <person name="Fuller L.J."/>
            <person name="Galland P."/>
            <person name="Gent M.E."/>
            <person name="Gigot D."/>
            <person name="Gilliquet V."/>
            <person name="Glansdorff N."/>
            <person name="Goffeau A."/>
            <person name="Grenson M."/>
            <person name="Grisanti P."/>
            <person name="Grivell L.A."/>
            <person name="de Haan M."/>
            <person name="Haasemann M."/>
            <person name="Hatat D."/>
            <person name="Hoenicka J."/>
            <person name="Hegemann J.H."/>
            <person name="Herbert C.J."/>
            <person name="Hilger F."/>
            <person name="Hohmann S."/>
            <person name="Hollenberg C.P."/>
            <person name="Huse K."/>
            <person name="Iborra F."/>
            <person name="Indge K.J."/>
            <person name="Isono K."/>
            <person name="Jacq C."/>
            <person name="Jacquet M."/>
            <person name="James C.M."/>
            <person name="Jauniaux J.-C."/>
            <person name="Jia Y."/>
            <person name="Jimenez A."/>
            <person name="Kelly A."/>
            <person name="Kleinhans U."/>
            <person name="Kreisl P."/>
            <person name="Lanfranchi G."/>
            <person name="Lewis C."/>
            <person name="van der Linden C.G."/>
            <person name="Lucchini G."/>
            <person name="Lutzenkirchen K."/>
            <person name="Maat M.J."/>
            <person name="Mallet L."/>
            <person name="Mannhaupt G."/>
            <person name="Martegani E."/>
            <person name="Mathieu A."/>
            <person name="Maurer C.T.C."/>
            <person name="McConnell D."/>
            <person name="McKee R.A."/>
            <person name="Messenguy F."/>
            <person name="Mewes H.-W."/>
            <person name="Molemans F."/>
            <person name="Montague M.A."/>
            <person name="Muzi Falconi M."/>
            <person name="Navas L."/>
            <person name="Newlon C.S."/>
            <person name="Noone D."/>
            <person name="Pallier C."/>
            <person name="Panzeri L."/>
            <person name="Pearson B.M."/>
            <person name="Perea J."/>
            <person name="Philippsen P."/>
            <person name="Pierard A."/>
            <person name="Planta R.J."/>
            <person name="Plevani P."/>
            <person name="Poetsch B."/>
            <person name="Pohl F.M."/>
            <person name="Purnelle B."/>
            <person name="Ramezani Rad M."/>
            <person name="Rasmussen S.W."/>
            <person name="Raynal A."/>
            <person name="Remacha M.A."/>
            <person name="Richterich P."/>
            <person name="Roberts A.B."/>
            <person name="Rodriguez F."/>
            <person name="Sanz E."/>
            <person name="Schaaff-Gerstenschlaeger I."/>
            <person name="Scherens B."/>
            <person name="Schweitzer B."/>
            <person name="Shu Y."/>
            <person name="Skala J."/>
            <person name="Slonimski P.P."/>
            <person name="Sor F."/>
            <person name="Soustelle C."/>
            <person name="Spiegelberg R."/>
            <person name="Stateva L.I."/>
            <person name="Steensma H.Y."/>
            <person name="Steiner S."/>
            <person name="Thierry A."/>
            <person name="Thireos G."/>
            <person name="Tzermia M."/>
            <person name="Urrestarazu L.A."/>
            <person name="Valle G."/>
            <person name="Vetter I."/>
            <person name="van Vliet-Reedijk J.C."/>
            <person name="Voet M."/>
            <person name="Volckaert G."/>
            <person name="Vreken P."/>
            <person name="Wang H."/>
            <person name="Warmington J.R."/>
            <person name="von Wettstein D."/>
            <person name="Wicksteed B.L."/>
            <person name="Wilson C."/>
            <person name="Wurst H."/>
            <person name="Xu G."/>
            <person name="Yoshikawa A."/>
            <person name="Zimmermann F.K."/>
            <person name="Sgouros J.G."/>
        </authorList>
    </citation>
    <scope>NUCLEOTIDE SEQUENCE [LARGE SCALE GENOMIC DNA]</scope>
    <source>
        <strain>ATCC 204508 / S288c</strain>
    </source>
</reference>
<reference key="2">
    <citation type="journal article" date="2014" name="G3 (Bethesda)">
        <title>The reference genome sequence of Saccharomyces cerevisiae: Then and now.</title>
        <authorList>
            <person name="Engel S.R."/>
            <person name="Dietrich F.S."/>
            <person name="Fisk D.G."/>
            <person name="Binkley G."/>
            <person name="Balakrishnan R."/>
            <person name="Costanzo M.C."/>
            <person name="Dwight S.S."/>
            <person name="Hitz B.C."/>
            <person name="Karra K."/>
            <person name="Nash R.S."/>
            <person name="Weng S."/>
            <person name="Wong E.D."/>
            <person name="Lloyd P."/>
            <person name="Skrzypek M.S."/>
            <person name="Miyasato S.R."/>
            <person name="Simison M."/>
            <person name="Cherry J.M."/>
        </authorList>
    </citation>
    <scope>GENOME REANNOTATION</scope>
    <source>
        <strain>ATCC 204508 / S288c</strain>
    </source>
</reference>
<reference key="3">
    <citation type="journal article" date="2007" name="Genome Res.">
        <title>Approaching a complete repository of sequence-verified protein-encoding clones for Saccharomyces cerevisiae.</title>
        <authorList>
            <person name="Hu Y."/>
            <person name="Rolfs A."/>
            <person name="Bhullar B."/>
            <person name="Murthy T.V.S."/>
            <person name="Zhu C."/>
            <person name="Berger M.F."/>
            <person name="Camargo A.A."/>
            <person name="Kelley F."/>
            <person name="McCarron S."/>
            <person name="Jepson D."/>
            <person name="Richardson A."/>
            <person name="Raphael J."/>
            <person name="Moreira D."/>
            <person name="Taycher E."/>
            <person name="Zuo D."/>
            <person name="Mohr S."/>
            <person name="Kane M.F."/>
            <person name="Williamson J."/>
            <person name="Simpson A.J.G."/>
            <person name="Bulyk M.L."/>
            <person name="Harlow E."/>
            <person name="Marsischky G."/>
            <person name="Kolodner R.D."/>
            <person name="LaBaer J."/>
        </authorList>
    </citation>
    <scope>NUCLEOTIDE SEQUENCE [GENOMIC DNA]</scope>
    <source>
        <strain>ATCC 204508 / S288c</strain>
    </source>
</reference>
<reference key="4">
    <citation type="journal article" date="1992" name="Protein Sci.">
        <title>Comprehensive sequence analysis of the 182 predicted open reading frames of yeast chromosome III.</title>
        <authorList>
            <person name="Bork P."/>
            <person name="Ouzounis C."/>
            <person name="Sander C."/>
            <person name="Scharf M."/>
            <person name="Schneider R."/>
            <person name="Sonnhammer E."/>
        </authorList>
    </citation>
    <scope>SIMILARITY TO SRP1/TIP1</scope>
</reference>
<reference key="5">
    <citation type="journal article" date="1994" name="Gene">
        <title>Seripauperins of Saccharomyces cerevisiae: a new multigene family encoding serine-poor relatives of serine-rich proteins.</title>
        <authorList>
            <person name="Viswanathan M."/>
            <person name="Muthukumar G."/>
            <person name="Cong Y.-S."/>
            <person name="Lenard J."/>
        </authorList>
    </citation>
    <scope>GENE NAME</scope>
</reference>